<feature type="chain" id="PRO_1000056208" description="Bifunctional protein GlmU">
    <location>
        <begin position="1"/>
        <end position="430"/>
    </location>
</feature>
<feature type="region of interest" description="Pyrophosphorylase" evidence="1">
    <location>
        <begin position="1"/>
        <end position="223"/>
    </location>
</feature>
<feature type="region of interest" description="Linker" evidence="1">
    <location>
        <begin position="224"/>
        <end position="244"/>
    </location>
</feature>
<feature type="region of interest" description="N-acetyltransferase" evidence="1">
    <location>
        <begin position="245"/>
        <end position="430"/>
    </location>
</feature>
<feature type="active site" description="Proton acceptor" evidence="1">
    <location>
        <position position="336"/>
    </location>
</feature>
<feature type="binding site" evidence="1">
    <location>
        <begin position="8"/>
        <end position="11"/>
    </location>
    <ligand>
        <name>UDP-N-acetyl-alpha-D-glucosamine</name>
        <dbReference type="ChEBI" id="CHEBI:57705"/>
    </ligand>
</feature>
<feature type="binding site" evidence="1">
    <location>
        <position position="22"/>
    </location>
    <ligand>
        <name>UDP-N-acetyl-alpha-D-glucosamine</name>
        <dbReference type="ChEBI" id="CHEBI:57705"/>
    </ligand>
</feature>
<feature type="binding site" evidence="1">
    <location>
        <begin position="81"/>
        <end position="82"/>
    </location>
    <ligand>
        <name>UDP-N-acetyl-alpha-D-glucosamine</name>
        <dbReference type="ChEBI" id="CHEBI:57705"/>
    </ligand>
</feature>
<feature type="binding site" evidence="1">
    <location>
        <position position="102"/>
    </location>
    <ligand>
        <name>Mg(2+)</name>
        <dbReference type="ChEBI" id="CHEBI:18420"/>
    </ligand>
</feature>
<feature type="binding site" evidence="1">
    <location>
        <position position="135"/>
    </location>
    <ligand>
        <name>UDP-N-acetyl-alpha-D-glucosamine</name>
        <dbReference type="ChEBI" id="CHEBI:57705"/>
    </ligand>
</feature>
<feature type="binding site" evidence="1">
    <location>
        <position position="149"/>
    </location>
    <ligand>
        <name>UDP-N-acetyl-alpha-D-glucosamine</name>
        <dbReference type="ChEBI" id="CHEBI:57705"/>
    </ligand>
</feature>
<feature type="binding site" evidence="1">
    <location>
        <position position="164"/>
    </location>
    <ligand>
        <name>UDP-N-acetyl-alpha-D-glucosamine</name>
        <dbReference type="ChEBI" id="CHEBI:57705"/>
    </ligand>
</feature>
<feature type="binding site" evidence="1">
    <location>
        <position position="221"/>
    </location>
    <ligand>
        <name>Mg(2+)</name>
        <dbReference type="ChEBI" id="CHEBI:18420"/>
    </ligand>
</feature>
<feature type="binding site" evidence="1">
    <location>
        <position position="221"/>
    </location>
    <ligand>
        <name>UDP-N-acetyl-alpha-D-glucosamine</name>
        <dbReference type="ChEBI" id="CHEBI:57705"/>
    </ligand>
</feature>
<feature type="binding site" evidence="1">
    <location>
        <position position="308"/>
    </location>
    <ligand>
        <name>UDP-N-acetyl-alpha-D-glucosamine</name>
        <dbReference type="ChEBI" id="CHEBI:57705"/>
    </ligand>
</feature>
<feature type="binding site" evidence="1">
    <location>
        <position position="325"/>
    </location>
    <ligand>
        <name>UDP-N-acetyl-alpha-D-glucosamine</name>
        <dbReference type="ChEBI" id="CHEBI:57705"/>
    </ligand>
</feature>
<feature type="binding site" evidence="1">
    <location>
        <position position="339"/>
    </location>
    <ligand>
        <name>UDP-N-acetyl-alpha-D-glucosamine</name>
        <dbReference type="ChEBI" id="CHEBI:57705"/>
    </ligand>
</feature>
<feature type="binding site" evidence="1">
    <location>
        <position position="350"/>
    </location>
    <ligand>
        <name>UDP-N-acetyl-alpha-D-glucosamine</name>
        <dbReference type="ChEBI" id="CHEBI:57705"/>
    </ligand>
</feature>
<feature type="binding site" evidence="1">
    <location>
        <position position="353"/>
    </location>
    <ligand>
        <name>acetyl-CoA</name>
        <dbReference type="ChEBI" id="CHEBI:57288"/>
    </ligand>
</feature>
<feature type="binding site" evidence="1">
    <location>
        <begin position="359"/>
        <end position="360"/>
    </location>
    <ligand>
        <name>acetyl-CoA</name>
        <dbReference type="ChEBI" id="CHEBI:57288"/>
    </ligand>
</feature>
<feature type="binding site" evidence="1">
    <location>
        <position position="378"/>
    </location>
    <ligand>
        <name>acetyl-CoA</name>
        <dbReference type="ChEBI" id="CHEBI:57288"/>
    </ligand>
</feature>
<feature type="binding site" evidence="1">
    <location>
        <position position="396"/>
    </location>
    <ligand>
        <name>acetyl-CoA</name>
        <dbReference type="ChEBI" id="CHEBI:57288"/>
    </ligand>
</feature>
<feature type="binding site" evidence="1">
    <location>
        <position position="413"/>
    </location>
    <ligand>
        <name>acetyl-CoA</name>
        <dbReference type="ChEBI" id="CHEBI:57288"/>
    </ligand>
</feature>
<gene>
    <name evidence="1" type="primary">glmU</name>
    <name type="ordered locus">SUN_1836</name>
</gene>
<comment type="function">
    <text evidence="1">Catalyzes the last two sequential reactions in the de novo biosynthetic pathway for UDP-N-acetylglucosamine (UDP-GlcNAc). The C-terminal domain catalyzes the transfer of acetyl group from acetyl coenzyme A to glucosamine-1-phosphate (GlcN-1-P) to produce N-acetylglucosamine-1-phosphate (GlcNAc-1-P), which is converted into UDP-GlcNAc by the transfer of uridine 5-monophosphate (from uridine 5-triphosphate), a reaction catalyzed by the N-terminal domain.</text>
</comment>
<comment type="catalytic activity">
    <reaction evidence="1">
        <text>alpha-D-glucosamine 1-phosphate + acetyl-CoA = N-acetyl-alpha-D-glucosamine 1-phosphate + CoA + H(+)</text>
        <dbReference type="Rhea" id="RHEA:13725"/>
        <dbReference type="ChEBI" id="CHEBI:15378"/>
        <dbReference type="ChEBI" id="CHEBI:57287"/>
        <dbReference type="ChEBI" id="CHEBI:57288"/>
        <dbReference type="ChEBI" id="CHEBI:57776"/>
        <dbReference type="ChEBI" id="CHEBI:58516"/>
        <dbReference type="EC" id="2.3.1.157"/>
    </reaction>
</comment>
<comment type="catalytic activity">
    <reaction evidence="1">
        <text>N-acetyl-alpha-D-glucosamine 1-phosphate + UTP + H(+) = UDP-N-acetyl-alpha-D-glucosamine + diphosphate</text>
        <dbReference type="Rhea" id="RHEA:13509"/>
        <dbReference type="ChEBI" id="CHEBI:15378"/>
        <dbReference type="ChEBI" id="CHEBI:33019"/>
        <dbReference type="ChEBI" id="CHEBI:46398"/>
        <dbReference type="ChEBI" id="CHEBI:57705"/>
        <dbReference type="ChEBI" id="CHEBI:57776"/>
        <dbReference type="EC" id="2.7.7.23"/>
    </reaction>
</comment>
<comment type="cofactor">
    <cofactor evidence="1">
        <name>Mg(2+)</name>
        <dbReference type="ChEBI" id="CHEBI:18420"/>
    </cofactor>
    <text evidence="1">Binds 1 Mg(2+) ion per subunit.</text>
</comment>
<comment type="pathway">
    <text evidence="1">Nucleotide-sugar biosynthesis; UDP-N-acetyl-alpha-D-glucosamine biosynthesis; N-acetyl-alpha-D-glucosamine 1-phosphate from alpha-D-glucosamine 6-phosphate (route II): step 2/2.</text>
</comment>
<comment type="pathway">
    <text evidence="1">Nucleotide-sugar biosynthesis; UDP-N-acetyl-alpha-D-glucosamine biosynthesis; UDP-N-acetyl-alpha-D-glucosamine from N-acetyl-alpha-D-glucosamine 1-phosphate: step 1/1.</text>
</comment>
<comment type="pathway">
    <text evidence="1">Bacterial outer membrane biogenesis; LPS lipid A biosynthesis.</text>
</comment>
<comment type="subunit">
    <text evidence="1">Homotrimer.</text>
</comment>
<comment type="subcellular location">
    <subcellularLocation>
        <location evidence="1">Cytoplasm</location>
    </subcellularLocation>
</comment>
<comment type="similarity">
    <text evidence="1">In the N-terminal section; belongs to the N-acetylglucosamine-1-phosphate uridyltransferase family.</text>
</comment>
<comment type="similarity">
    <text evidence="1">In the C-terminal section; belongs to the transferase hexapeptide repeat family.</text>
</comment>
<sequence length="430" mass="47441">MSISVVILAAGQGTRMKSSTPKVLHTISGKPMLFHAIDAAKEISDDITVILHHQEERIQKEVEAEYENIIFHRQDAKNFPGTGGAMKGVYTRHERTLILNGDMPLIKKSSLEALTSGDADINMSIIRLEDPSGYGRVIIEDDKVVEIVEQKDCNEAQLCTQTVNAGIYAVDTALLERYIPLLRNDNAQKEYYLTDIVKMAVDEGRTVHPVYVEEEEFKGVNSKLDLARAEEIMQRRIKEALMMAGVTMCLPETIYIDCRATFEGECELENGVRIQGAAQLVNTHIKAHSVIEDSYLKNSDVGPMGRVRPGSKLVDTHIGNFVEVKKSDLNGVKAGHLSYIGDAQIGEGSNIGAGVITCNYDGKNKFRTIIGKNVFVGSDTQLVAPVCIEDDVIIAAGTTVNKDVEKGVLAISRTPMRTVKNFFYKFFGDK</sequence>
<proteinExistence type="inferred from homology"/>
<keyword id="KW-0012">Acyltransferase</keyword>
<keyword id="KW-0133">Cell shape</keyword>
<keyword id="KW-0961">Cell wall biogenesis/degradation</keyword>
<keyword id="KW-0963">Cytoplasm</keyword>
<keyword id="KW-0460">Magnesium</keyword>
<keyword id="KW-0479">Metal-binding</keyword>
<keyword id="KW-0511">Multifunctional enzyme</keyword>
<keyword id="KW-0548">Nucleotidyltransferase</keyword>
<keyword id="KW-0573">Peptidoglycan synthesis</keyword>
<keyword id="KW-0677">Repeat</keyword>
<keyword id="KW-0808">Transferase</keyword>
<accession>A6QBC4</accession>
<reference key="1">
    <citation type="journal article" date="2007" name="Proc. Natl. Acad. Sci. U.S.A.">
        <title>Deep-sea vent epsilon-proteobacterial genomes provide insights into emergence of pathogens.</title>
        <authorList>
            <person name="Nakagawa S."/>
            <person name="Takaki Y."/>
            <person name="Shimamura S."/>
            <person name="Reysenbach A.-L."/>
            <person name="Takai K."/>
            <person name="Horikoshi K."/>
        </authorList>
    </citation>
    <scope>NUCLEOTIDE SEQUENCE [LARGE SCALE GENOMIC DNA]</scope>
    <source>
        <strain>NBC37-1</strain>
    </source>
</reference>
<dbReference type="EC" id="2.7.7.23" evidence="1"/>
<dbReference type="EC" id="2.3.1.157" evidence="1"/>
<dbReference type="EMBL" id="AP009179">
    <property type="protein sequence ID" value="BAF72783.1"/>
    <property type="molecule type" value="Genomic_DNA"/>
</dbReference>
<dbReference type="RefSeq" id="WP_012083596.1">
    <property type="nucleotide sequence ID" value="NC_009663.1"/>
</dbReference>
<dbReference type="SMR" id="A6QBC4"/>
<dbReference type="STRING" id="387093.SUN_1836"/>
<dbReference type="KEGG" id="sun:SUN_1836"/>
<dbReference type="eggNOG" id="COG1207">
    <property type="taxonomic scope" value="Bacteria"/>
</dbReference>
<dbReference type="HOGENOM" id="CLU_029499_15_2_7"/>
<dbReference type="OrthoDB" id="9775031at2"/>
<dbReference type="UniPathway" id="UPA00113">
    <property type="reaction ID" value="UER00532"/>
</dbReference>
<dbReference type="UniPathway" id="UPA00113">
    <property type="reaction ID" value="UER00533"/>
</dbReference>
<dbReference type="UniPathway" id="UPA00973"/>
<dbReference type="Proteomes" id="UP000006378">
    <property type="component" value="Chromosome"/>
</dbReference>
<dbReference type="GO" id="GO:0005737">
    <property type="term" value="C:cytoplasm"/>
    <property type="evidence" value="ECO:0007669"/>
    <property type="project" value="UniProtKB-SubCell"/>
</dbReference>
<dbReference type="GO" id="GO:0016020">
    <property type="term" value="C:membrane"/>
    <property type="evidence" value="ECO:0007669"/>
    <property type="project" value="GOC"/>
</dbReference>
<dbReference type="GO" id="GO:0019134">
    <property type="term" value="F:glucosamine-1-phosphate N-acetyltransferase activity"/>
    <property type="evidence" value="ECO:0007669"/>
    <property type="project" value="UniProtKB-UniRule"/>
</dbReference>
<dbReference type="GO" id="GO:0000287">
    <property type="term" value="F:magnesium ion binding"/>
    <property type="evidence" value="ECO:0007669"/>
    <property type="project" value="UniProtKB-UniRule"/>
</dbReference>
<dbReference type="GO" id="GO:0003977">
    <property type="term" value="F:UDP-N-acetylglucosamine diphosphorylase activity"/>
    <property type="evidence" value="ECO:0007669"/>
    <property type="project" value="UniProtKB-UniRule"/>
</dbReference>
<dbReference type="GO" id="GO:0000902">
    <property type="term" value="P:cell morphogenesis"/>
    <property type="evidence" value="ECO:0007669"/>
    <property type="project" value="UniProtKB-UniRule"/>
</dbReference>
<dbReference type="GO" id="GO:0071555">
    <property type="term" value="P:cell wall organization"/>
    <property type="evidence" value="ECO:0007669"/>
    <property type="project" value="UniProtKB-KW"/>
</dbReference>
<dbReference type="GO" id="GO:0009245">
    <property type="term" value="P:lipid A biosynthetic process"/>
    <property type="evidence" value="ECO:0007669"/>
    <property type="project" value="UniProtKB-UniRule"/>
</dbReference>
<dbReference type="GO" id="GO:0009252">
    <property type="term" value="P:peptidoglycan biosynthetic process"/>
    <property type="evidence" value="ECO:0007669"/>
    <property type="project" value="UniProtKB-UniRule"/>
</dbReference>
<dbReference type="GO" id="GO:0008360">
    <property type="term" value="P:regulation of cell shape"/>
    <property type="evidence" value="ECO:0007669"/>
    <property type="project" value="UniProtKB-KW"/>
</dbReference>
<dbReference type="GO" id="GO:0006048">
    <property type="term" value="P:UDP-N-acetylglucosamine biosynthetic process"/>
    <property type="evidence" value="ECO:0007669"/>
    <property type="project" value="UniProtKB-UniPathway"/>
</dbReference>
<dbReference type="CDD" id="cd02540">
    <property type="entry name" value="GT2_GlmU_N_bac"/>
    <property type="match status" value="1"/>
</dbReference>
<dbReference type="CDD" id="cd03353">
    <property type="entry name" value="LbH_GlmU_C"/>
    <property type="match status" value="1"/>
</dbReference>
<dbReference type="Gene3D" id="2.160.10.10">
    <property type="entry name" value="Hexapeptide repeat proteins"/>
    <property type="match status" value="1"/>
</dbReference>
<dbReference type="Gene3D" id="3.90.550.10">
    <property type="entry name" value="Spore Coat Polysaccharide Biosynthesis Protein SpsA, Chain A"/>
    <property type="match status" value="1"/>
</dbReference>
<dbReference type="HAMAP" id="MF_01631">
    <property type="entry name" value="GlmU"/>
    <property type="match status" value="1"/>
</dbReference>
<dbReference type="InterPro" id="IPR005882">
    <property type="entry name" value="Bifunctional_GlmU"/>
</dbReference>
<dbReference type="InterPro" id="IPR050065">
    <property type="entry name" value="GlmU-like"/>
</dbReference>
<dbReference type="InterPro" id="IPR038009">
    <property type="entry name" value="GlmU_C_LbH"/>
</dbReference>
<dbReference type="InterPro" id="IPR001451">
    <property type="entry name" value="Hexapep"/>
</dbReference>
<dbReference type="InterPro" id="IPR018357">
    <property type="entry name" value="Hexapep_transf_CS"/>
</dbReference>
<dbReference type="InterPro" id="IPR025877">
    <property type="entry name" value="MobA-like_NTP_Trfase"/>
</dbReference>
<dbReference type="InterPro" id="IPR029044">
    <property type="entry name" value="Nucleotide-diphossugar_trans"/>
</dbReference>
<dbReference type="InterPro" id="IPR011004">
    <property type="entry name" value="Trimer_LpxA-like_sf"/>
</dbReference>
<dbReference type="NCBIfam" id="TIGR01173">
    <property type="entry name" value="glmU"/>
    <property type="match status" value="1"/>
</dbReference>
<dbReference type="NCBIfam" id="NF010939">
    <property type="entry name" value="PRK14359.1"/>
    <property type="match status" value="1"/>
</dbReference>
<dbReference type="PANTHER" id="PTHR43584:SF3">
    <property type="entry name" value="BIFUNCTIONAL PROTEIN GLMU"/>
    <property type="match status" value="1"/>
</dbReference>
<dbReference type="PANTHER" id="PTHR43584">
    <property type="entry name" value="NUCLEOTIDYL TRANSFERASE"/>
    <property type="match status" value="1"/>
</dbReference>
<dbReference type="Pfam" id="PF00132">
    <property type="entry name" value="Hexapep"/>
    <property type="match status" value="1"/>
</dbReference>
<dbReference type="Pfam" id="PF12804">
    <property type="entry name" value="NTP_transf_3"/>
    <property type="match status" value="1"/>
</dbReference>
<dbReference type="SUPFAM" id="SSF53448">
    <property type="entry name" value="Nucleotide-diphospho-sugar transferases"/>
    <property type="match status" value="1"/>
</dbReference>
<dbReference type="SUPFAM" id="SSF51161">
    <property type="entry name" value="Trimeric LpxA-like enzymes"/>
    <property type="match status" value="1"/>
</dbReference>
<dbReference type="PROSITE" id="PS00101">
    <property type="entry name" value="HEXAPEP_TRANSFERASES"/>
    <property type="match status" value="1"/>
</dbReference>
<protein>
    <recommendedName>
        <fullName evidence="1">Bifunctional protein GlmU</fullName>
    </recommendedName>
    <domain>
        <recommendedName>
            <fullName evidence="1">UDP-N-acetylglucosamine pyrophosphorylase</fullName>
            <ecNumber evidence="1">2.7.7.23</ecNumber>
        </recommendedName>
        <alternativeName>
            <fullName evidence="1">N-acetylglucosamine-1-phosphate uridyltransferase</fullName>
        </alternativeName>
    </domain>
    <domain>
        <recommendedName>
            <fullName evidence="1">Glucosamine-1-phosphate N-acetyltransferase</fullName>
            <ecNumber evidence="1">2.3.1.157</ecNumber>
        </recommendedName>
    </domain>
</protein>
<organism>
    <name type="scientific">Sulfurovum sp. (strain NBC37-1)</name>
    <dbReference type="NCBI Taxonomy" id="387093"/>
    <lineage>
        <taxon>Bacteria</taxon>
        <taxon>Pseudomonadati</taxon>
        <taxon>Campylobacterota</taxon>
        <taxon>Epsilonproteobacteria</taxon>
        <taxon>Campylobacterales</taxon>
        <taxon>Sulfurovaceae</taxon>
        <taxon>Sulfurovum</taxon>
    </lineage>
</organism>
<name>GLMU_SULNB</name>
<evidence type="ECO:0000255" key="1">
    <source>
        <dbReference type="HAMAP-Rule" id="MF_01631"/>
    </source>
</evidence>